<keyword id="KW-0963">Cytoplasm</keyword>
<keyword id="KW-0227">DNA damage</keyword>
<keyword id="KW-0233">DNA recombination</keyword>
<keyword id="KW-0234">DNA repair</keyword>
<keyword id="KW-0238">DNA-binding</keyword>
<keyword id="KW-0255">Endonuclease</keyword>
<keyword id="KW-0378">Hydrolase</keyword>
<keyword id="KW-0460">Magnesium</keyword>
<keyword id="KW-0479">Metal-binding</keyword>
<keyword id="KW-0540">Nuclease</keyword>
<keyword id="KW-1185">Reference proteome</keyword>
<accession>Q55506</accession>
<evidence type="ECO:0000255" key="1">
    <source>
        <dbReference type="HAMAP-Rule" id="MF_00034"/>
    </source>
</evidence>
<evidence type="ECO:0000305" key="2"/>
<sequence length="167" mass="18193">MDQTEAAQRWLGIDPGLAIIGWAILDGQPDLSAHLVDYGIIETSKNLSTPERLVEIEQDIHVLLEEFSPQAIAMEMPFFSRQIKAAGGVMQALGVINLVIYREKSIQPVFLHQSSWKCHLGNGKANKAEVAAMVQNFFGLEDLPIDDSVDAIAIALAGLNGVRNDIG</sequence>
<comment type="function">
    <text evidence="1">The RuvA-RuvB-RuvC complex processes Holliday junction (HJ) DNA during genetic recombination and DNA repair. Endonuclease that resolves HJ intermediates. Cleaves cruciform DNA by making single-stranded nicks across the HJ at symmetrical positions within the homologous arms, yielding a 5'-phosphate and a 3'-hydroxyl group; requires a central core of homology in the junction. The consensus cleavage sequence is 5'-(A/T)TT(C/G)-3'. Cleavage occurs on the 3'-side of the TT dinucleotide at the point of strand exchange. HJ branch migration catalyzed by RuvA-RuvB allows RuvC to scan DNA until it finds its consensus sequence, where it cleaves and resolves the cruciform DNA.</text>
</comment>
<comment type="catalytic activity">
    <reaction evidence="1">
        <text>Endonucleolytic cleavage at a junction such as a reciprocal single-stranded crossover between two homologous DNA duplexes (Holliday junction).</text>
        <dbReference type="EC" id="3.1.21.10"/>
    </reaction>
</comment>
<comment type="cofactor">
    <cofactor evidence="1">
        <name>Mg(2+)</name>
        <dbReference type="ChEBI" id="CHEBI:18420"/>
    </cofactor>
    <text evidence="1">Binds 2 Mg(2+) ion per subunit.</text>
</comment>
<comment type="subunit">
    <text evidence="1">Homodimer which binds Holliday junction (HJ) DNA. The HJ becomes 2-fold symmetrical on binding to RuvC with unstacked arms; it has a different conformation from HJ DNA in complex with RuvA. In the full resolvosome a probable DNA-RuvA(4)-RuvB(12)-RuvC(2) complex forms which resolves the HJ.</text>
</comment>
<comment type="subcellular location">
    <subcellularLocation>
        <location evidence="1">Cytoplasm</location>
    </subcellularLocation>
</comment>
<comment type="similarity">
    <text evidence="1 2">Belongs to the RuvC family.</text>
</comment>
<feature type="chain" id="PRO_0000183138" description="Crossover junction endodeoxyribonuclease RuvC">
    <location>
        <begin position="1"/>
        <end position="167"/>
    </location>
</feature>
<feature type="active site" evidence="1">
    <location>
        <position position="14"/>
    </location>
</feature>
<feature type="active site" evidence="1">
    <location>
        <position position="75"/>
    </location>
</feature>
<feature type="active site" evidence="1">
    <location>
        <position position="147"/>
    </location>
</feature>
<feature type="binding site" evidence="1">
    <location>
        <position position="14"/>
    </location>
    <ligand>
        <name>Mg(2+)</name>
        <dbReference type="ChEBI" id="CHEBI:18420"/>
        <label>1</label>
    </ligand>
</feature>
<feature type="binding site" evidence="1">
    <location>
        <position position="75"/>
    </location>
    <ligand>
        <name>Mg(2+)</name>
        <dbReference type="ChEBI" id="CHEBI:18420"/>
        <label>2</label>
    </ligand>
</feature>
<feature type="binding site" evidence="1">
    <location>
        <position position="147"/>
    </location>
    <ligand>
        <name>Mg(2+)</name>
        <dbReference type="ChEBI" id="CHEBI:18420"/>
        <label>1</label>
    </ligand>
</feature>
<organism>
    <name type="scientific">Synechocystis sp. (strain ATCC 27184 / PCC 6803 / Kazusa)</name>
    <dbReference type="NCBI Taxonomy" id="1111708"/>
    <lineage>
        <taxon>Bacteria</taxon>
        <taxon>Bacillati</taxon>
        <taxon>Cyanobacteriota</taxon>
        <taxon>Cyanophyceae</taxon>
        <taxon>Synechococcales</taxon>
        <taxon>Merismopediaceae</taxon>
        <taxon>Synechocystis</taxon>
    </lineage>
</organism>
<proteinExistence type="inferred from homology"/>
<gene>
    <name evidence="1" type="primary">ruvC</name>
    <name type="ordered locus">sll0896</name>
</gene>
<protein>
    <recommendedName>
        <fullName evidence="1">Crossover junction endodeoxyribonuclease RuvC</fullName>
        <ecNumber evidence="1">3.1.21.10</ecNumber>
    </recommendedName>
    <alternativeName>
        <fullName evidence="1">Holliday junction nuclease RuvC</fullName>
    </alternativeName>
    <alternativeName>
        <fullName evidence="1">Holliday junction resolvase RuvC</fullName>
    </alternativeName>
</protein>
<reference key="1">
    <citation type="journal article" date="1995" name="DNA Res.">
        <title>Sequence analysis of the genome of the unicellular cyanobacterium Synechocystis sp. strain PCC6803. I. Sequence features in the 1 Mb region from map positions 64% to 92% of the genome.</title>
        <authorList>
            <person name="Kaneko T."/>
            <person name="Tanaka A."/>
            <person name="Sato S."/>
            <person name="Kotani H."/>
            <person name="Sazuka T."/>
            <person name="Miyajima N."/>
            <person name="Sugiura M."/>
            <person name="Tabata S."/>
        </authorList>
    </citation>
    <scope>NUCLEOTIDE SEQUENCE [LARGE SCALE GENOMIC DNA]</scope>
    <source>
        <strain>ATCC 27184 / PCC 6803 / N-1</strain>
    </source>
</reference>
<reference key="2">
    <citation type="journal article" date="1996" name="DNA Res.">
        <title>Sequence analysis of the genome of the unicellular cyanobacterium Synechocystis sp. strain PCC6803. II. Sequence determination of the entire genome and assignment of potential protein-coding regions.</title>
        <authorList>
            <person name="Kaneko T."/>
            <person name="Sato S."/>
            <person name="Kotani H."/>
            <person name="Tanaka A."/>
            <person name="Asamizu E."/>
            <person name="Nakamura Y."/>
            <person name="Miyajima N."/>
            <person name="Hirosawa M."/>
            <person name="Sugiura M."/>
            <person name="Sasamoto S."/>
            <person name="Kimura T."/>
            <person name="Hosouchi T."/>
            <person name="Matsuno A."/>
            <person name="Muraki A."/>
            <person name="Nakazaki N."/>
            <person name="Naruo K."/>
            <person name="Okumura S."/>
            <person name="Shimpo S."/>
            <person name="Takeuchi C."/>
            <person name="Wada T."/>
            <person name="Watanabe A."/>
            <person name="Yamada M."/>
            <person name="Yasuda M."/>
            <person name="Tabata S."/>
        </authorList>
    </citation>
    <scope>NUCLEOTIDE SEQUENCE [LARGE SCALE GENOMIC DNA]</scope>
    <source>
        <strain>ATCC 27184 / PCC 6803 / Kazusa</strain>
    </source>
</reference>
<dbReference type="EC" id="3.1.21.10" evidence="1"/>
<dbReference type="EMBL" id="BA000022">
    <property type="protein sequence ID" value="BAA10861.1"/>
    <property type="molecule type" value="Genomic_DNA"/>
</dbReference>
<dbReference type="PIR" id="S76014">
    <property type="entry name" value="S76014"/>
</dbReference>
<dbReference type="SMR" id="Q55506"/>
<dbReference type="STRING" id="1148.gene:10500367"/>
<dbReference type="PaxDb" id="1148-1001371"/>
<dbReference type="EnsemblBacteria" id="BAA10861">
    <property type="protein sequence ID" value="BAA10861"/>
    <property type="gene ID" value="BAA10861"/>
</dbReference>
<dbReference type="KEGG" id="syn:sll0896"/>
<dbReference type="eggNOG" id="COG0817">
    <property type="taxonomic scope" value="Bacteria"/>
</dbReference>
<dbReference type="InParanoid" id="Q55506"/>
<dbReference type="PhylomeDB" id="Q55506"/>
<dbReference type="Proteomes" id="UP000001425">
    <property type="component" value="Chromosome"/>
</dbReference>
<dbReference type="GO" id="GO:0005737">
    <property type="term" value="C:cytoplasm"/>
    <property type="evidence" value="ECO:0007669"/>
    <property type="project" value="UniProtKB-SubCell"/>
</dbReference>
<dbReference type="GO" id="GO:0048476">
    <property type="term" value="C:Holliday junction resolvase complex"/>
    <property type="evidence" value="ECO:0007669"/>
    <property type="project" value="UniProtKB-UniRule"/>
</dbReference>
<dbReference type="GO" id="GO:0008821">
    <property type="term" value="F:crossover junction DNA endonuclease activity"/>
    <property type="evidence" value="ECO:0007669"/>
    <property type="project" value="UniProtKB-UniRule"/>
</dbReference>
<dbReference type="GO" id="GO:0003677">
    <property type="term" value="F:DNA binding"/>
    <property type="evidence" value="ECO:0007669"/>
    <property type="project" value="UniProtKB-KW"/>
</dbReference>
<dbReference type="GO" id="GO:0000287">
    <property type="term" value="F:magnesium ion binding"/>
    <property type="evidence" value="ECO:0007669"/>
    <property type="project" value="UniProtKB-UniRule"/>
</dbReference>
<dbReference type="GO" id="GO:0006310">
    <property type="term" value="P:DNA recombination"/>
    <property type="evidence" value="ECO:0007669"/>
    <property type="project" value="UniProtKB-UniRule"/>
</dbReference>
<dbReference type="GO" id="GO:0006281">
    <property type="term" value="P:DNA repair"/>
    <property type="evidence" value="ECO:0007669"/>
    <property type="project" value="UniProtKB-UniRule"/>
</dbReference>
<dbReference type="CDD" id="cd16962">
    <property type="entry name" value="RuvC"/>
    <property type="match status" value="1"/>
</dbReference>
<dbReference type="Gene3D" id="3.30.420.10">
    <property type="entry name" value="Ribonuclease H-like superfamily/Ribonuclease H"/>
    <property type="match status" value="1"/>
</dbReference>
<dbReference type="HAMAP" id="MF_00034">
    <property type="entry name" value="RuvC"/>
    <property type="match status" value="1"/>
</dbReference>
<dbReference type="InterPro" id="IPR012337">
    <property type="entry name" value="RNaseH-like_sf"/>
</dbReference>
<dbReference type="InterPro" id="IPR036397">
    <property type="entry name" value="RNaseH_sf"/>
</dbReference>
<dbReference type="InterPro" id="IPR020563">
    <property type="entry name" value="X-over_junc_endoDNase_Mg_BS"/>
</dbReference>
<dbReference type="InterPro" id="IPR002176">
    <property type="entry name" value="X-over_junc_endoDNase_RuvC"/>
</dbReference>
<dbReference type="PANTHER" id="PTHR30194">
    <property type="entry name" value="CROSSOVER JUNCTION ENDODEOXYRIBONUCLEASE RUVC"/>
    <property type="match status" value="1"/>
</dbReference>
<dbReference type="PANTHER" id="PTHR30194:SF3">
    <property type="entry name" value="CROSSOVER JUNCTION ENDODEOXYRIBONUCLEASE RUVC"/>
    <property type="match status" value="1"/>
</dbReference>
<dbReference type="Pfam" id="PF02075">
    <property type="entry name" value="RuvC"/>
    <property type="match status" value="1"/>
</dbReference>
<dbReference type="PRINTS" id="PR00696">
    <property type="entry name" value="RSOLVASERUVC"/>
</dbReference>
<dbReference type="SUPFAM" id="SSF53098">
    <property type="entry name" value="Ribonuclease H-like"/>
    <property type="match status" value="1"/>
</dbReference>
<dbReference type="PROSITE" id="PS01321">
    <property type="entry name" value="RUVC"/>
    <property type="match status" value="1"/>
</dbReference>
<name>RUVC_SYNY3</name>